<reference key="1">
    <citation type="journal article" date="2008" name="Appl. Environ. Microbiol.">
        <title>The genome of Polaromonas sp. strain JS666: insights into the evolution of a hydrocarbon- and xenobiotic-degrading bacterium, and features of relevance to biotechnology.</title>
        <authorList>
            <person name="Mattes T.E."/>
            <person name="Alexander A.K."/>
            <person name="Richardson P.M."/>
            <person name="Munk A.C."/>
            <person name="Han C.S."/>
            <person name="Stothard P."/>
            <person name="Coleman N.V."/>
        </authorList>
    </citation>
    <scope>NUCLEOTIDE SEQUENCE [LARGE SCALE GENOMIC DNA]</scope>
    <source>
        <strain>JS666 / ATCC BAA-500</strain>
    </source>
</reference>
<proteinExistence type="inferred from homology"/>
<protein>
    <recommendedName>
        <fullName evidence="1">Crossover junction endodeoxyribonuclease RuvC</fullName>
        <ecNumber evidence="1">3.1.21.10</ecNumber>
    </recommendedName>
    <alternativeName>
        <fullName evidence="1">Holliday junction nuclease RuvC</fullName>
    </alternativeName>
    <alternativeName>
        <fullName evidence="1">Holliday junction resolvase RuvC</fullName>
    </alternativeName>
</protein>
<comment type="function">
    <text evidence="1">The RuvA-RuvB-RuvC complex processes Holliday junction (HJ) DNA during genetic recombination and DNA repair. Endonuclease that resolves HJ intermediates. Cleaves cruciform DNA by making single-stranded nicks across the HJ at symmetrical positions within the homologous arms, yielding a 5'-phosphate and a 3'-hydroxyl group; requires a central core of homology in the junction. The consensus cleavage sequence is 5'-(A/T)TT(C/G)-3'. Cleavage occurs on the 3'-side of the TT dinucleotide at the point of strand exchange. HJ branch migration catalyzed by RuvA-RuvB allows RuvC to scan DNA until it finds its consensus sequence, where it cleaves and resolves the cruciform DNA.</text>
</comment>
<comment type="catalytic activity">
    <reaction evidence="1">
        <text>Endonucleolytic cleavage at a junction such as a reciprocal single-stranded crossover between two homologous DNA duplexes (Holliday junction).</text>
        <dbReference type="EC" id="3.1.21.10"/>
    </reaction>
</comment>
<comment type="cofactor">
    <cofactor evidence="1">
        <name>Mg(2+)</name>
        <dbReference type="ChEBI" id="CHEBI:18420"/>
    </cofactor>
    <text evidence="1">Binds 2 Mg(2+) ion per subunit.</text>
</comment>
<comment type="subunit">
    <text evidence="1">Homodimer which binds Holliday junction (HJ) DNA. The HJ becomes 2-fold symmetrical on binding to RuvC with unstacked arms; it has a different conformation from HJ DNA in complex with RuvA. In the full resolvosome a probable DNA-RuvA(4)-RuvB(12)-RuvC(2) complex forms which resolves the HJ.</text>
</comment>
<comment type="subcellular location">
    <subcellularLocation>
        <location evidence="1">Cytoplasm</location>
    </subcellularLocation>
</comment>
<comment type="similarity">
    <text evidence="1">Belongs to the RuvC family.</text>
</comment>
<organism>
    <name type="scientific">Polaromonas sp. (strain JS666 / ATCC BAA-500)</name>
    <dbReference type="NCBI Taxonomy" id="296591"/>
    <lineage>
        <taxon>Bacteria</taxon>
        <taxon>Pseudomonadati</taxon>
        <taxon>Pseudomonadota</taxon>
        <taxon>Betaproteobacteria</taxon>
        <taxon>Burkholderiales</taxon>
        <taxon>Comamonadaceae</taxon>
        <taxon>Polaromonas</taxon>
    </lineage>
</organism>
<dbReference type="EC" id="3.1.21.10" evidence="1"/>
<dbReference type="EMBL" id="CP000316">
    <property type="protein sequence ID" value="ABE43035.1"/>
    <property type="molecule type" value="Genomic_DNA"/>
</dbReference>
<dbReference type="RefSeq" id="WP_011482037.1">
    <property type="nucleotide sequence ID" value="NC_007948.1"/>
</dbReference>
<dbReference type="SMR" id="Q12EK7"/>
<dbReference type="STRING" id="296591.Bpro_1083"/>
<dbReference type="KEGG" id="pol:Bpro_1083"/>
<dbReference type="eggNOG" id="COG0817">
    <property type="taxonomic scope" value="Bacteria"/>
</dbReference>
<dbReference type="HOGENOM" id="CLU_091257_3_1_4"/>
<dbReference type="OrthoDB" id="9805499at2"/>
<dbReference type="Proteomes" id="UP000001983">
    <property type="component" value="Chromosome"/>
</dbReference>
<dbReference type="GO" id="GO:0005737">
    <property type="term" value="C:cytoplasm"/>
    <property type="evidence" value="ECO:0007669"/>
    <property type="project" value="UniProtKB-SubCell"/>
</dbReference>
<dbReference type="GO" id="GO:0048476">
    <property type="term" value="C:Holliday junction resolvase complex"/>
    <property type="evidence" value="ECO:0007669"/>
    <property type="project" value="UniProtKB-UniRule"/>
</dbReference>
<dbReference type="GO" id="GO:0008821">
    <property type="term" value="F:crossover junction DNA endonuclease activity"/>
    <property type="evidence" value="ECO:0007669"/>
    <property type="project" value="UniProtKB-UniRule"/>
</dbReference>
<dbReference type="GO" id="GO:0003677">
    <property type="term" value="F:DNA binding"/>
    <property type="evidence" value="ECO:0007669"/>
    <property type="project" value="UniProtKB-KW"/>
</dbReference>
<dbReference type="GO" id="GO:0000287">
    <property type="term" value="F:magnesium ion binding"/>
    <property type="evidence" value="ECO:0007669"/>
    <property type="project" value="UniProtKB-UniRule"/>
</dbReference>
<dbReference type="GO" id="GO:0006310">
    <property type="term" value="P:DNA recombination"/>
    <property type="evidence" value="ECO:0007669"/>
    <property type="project" value="UniProtKB-UniRule"/>
</dbReference>
<dbReference type="GO" id="GO:0006281">
    <property type="term" value="P:DNA repair"/>
    <property type="evidence" value="ECO:0007669"/>
    <property type="project" value="UniProtKB-UniRule"/>
</dbReference>
<dbReference type="CDD" id="cd16962">
    <property type="entry name" value="RuvC"/>
    <property type="match status" value="1"/>
</dbReference>
<dbReference type="FunFam" id="3.30.420.10:FF:000002">
    <property type="entry name" value="Crossover junction endodeoxyribonuclease RuvC"/>
    <property type="match status" value="1"/>
</dbReference>
<dbReference type="Gene3D" id="3.30.420.10">
    <property type="entry name" value="Ribonuclease H-like superfamily/Ribonuclease H"/>
    <property type="match status" value="1"/>
</dbReference>
<dbReference type="HAMAP" id="MF_00034">
    <property type="entry name" value="RuvC"/>
    <property type="match status" value="1"/>
</dbReference>
<dbReference type="InterPro" id="IPR012337">
    <property type="entry name" value="RNaseH-like_sf"/>
</dbReference>
<dbReference type="InterPro" id="IPR036397">
    <property type="entry name" value="RNaseH_sf"/>
</dbReference>
<dbReference type="InterPro" id="IPR020563">
    <property type="entry name" value="X-over_junc_endoDNase_Mg_BS"/>
</dbReference>
<dbReference type="InterPro" id="IPR002176">
    <property type="entry name" value="X-over_junc_endoDNase_RuvC"/>
</dbReference>
<dbReference type="NCBIfam" id="TIGR00228">
    <property type="entry name" value="ruvC"/>
    <property type="match status" value="1"/>
</dbReference>
<dbReference type="PANTHER" id="PTHR30194">
    <property type="entry name" value="CROSSOVER JUNCTION ENDODEOXYRIBONUCLEASE RUVC"/>
    <property type="match status" value="1"/>
</dbReference>
<dbReference type="PANTHER" id="PTHR30194:SF3">
    <property type="entry name" value="CROSSOVER JUNCTION ENDODEOXYRIBONUCLEASE RUVC"/>
    <property type="match status" value="1"/>
</dbReference>
<dbReference type="Pfam" id="PF02075">
    <property type="entry name" value="RuvC"/>
    <property type="match status" value="1"/>
</dbReference>
<dbReference type="PRINTS" id="PR00696">
    <property type="entry name" value="RSOLVASERUVC"/>
</dbReference>
<dbReference type="SUPFAM" id="SSF53098">
    <property type="entry name" value="Ribonuclease H-like"/>
    <property type="match status" value="1"/>
</dbReference>
<dbReference type="PROSITE" id="PS01321">
    <property type="entry name" value="RUVC"/>
    <property type="match status" value="1"/>
</dbReference>
<gene>
    <name evidence="1" type="primary">ruvC</name>
    <name type="ordered locus">Bpro_1083</name>
</gene>
<sequence>MRILGIDPGLQIAGFGVVEVDGPHLHYVASGTIKTTHMVRGDLPARLKVLFDGVREVVQRYQPDMASVEIVFTNVNPQATLLLGQARGACITALVSSDLTVAEYTALQMKKAVAGYGKAGKAEVQQMVMRLLKLPALPGKDAADALGLAITHAHAGRSTAILAAATALKPNASASYKAGRHY</sequence>
<feature type="chain" id="PRO_1000002791" description="Crossover junction endodeoxyribonuclease RuvC">
    <location>
        <begin position="1"/>
        <end position="182"/>
    </location>
</feature>
<feature type="active site" evidence="1">
    <location>
        <position position="7"/>
    </location>
</feature>
<feature type="active site" evidence="1">
    <location>
        <position position="69"/>
    </location>
</feature>
<feature type="active site" evidence="1">
    <location>
        <position position="141"/>
    </location>
</feature>
<feature type="binding site" evidence="1">
    <location>
        <position position="7"/>
    </location>
    <ligand>
        <name>Mg(2+)</name>
        <dbReference type="ChEBI" id="CHEBI:18420"/>
        <label>1</label>
    </ligand>
</feature>
<feature type="binding site" evidence="1">
    <location>
        <position position="69"/>
    </location>
    <ligand>
        <name>Mg(2+)</name>
        <dbReference type="ChEBI" id="CHEBI:18420"/>
        <label>2</label>
    </ligand>
</feature>
<feature type="binding site" evidence="1">
    <location>
        <position position="141"/>
    </location>
    <ligand>
        <name>Mg(2+)</name>
        <dbReference type="ChEBI" id="CHEBI:18420"/>
        <label>1</label>
    </ligand>
</feature>
<accession>Q12EK7</accession>
<name>RUVC_POLSJ</name>
<keyword id="KW-0963">Cytoplasm</keyword>
<keyword id="KW-0227">DNA damage</keyword>
<keyword id="KW-0233">DNA recombination</keyword>
<keyword id="KW-0234">DNA repair</keyword>
<keyword id="KW-0238">DNA-binding</keyword>
<keyword id="KW-0255">Endonuclease</keyword>
<keyword id="KW-0378">Hydrolase</keyword>
<keyword id="KW-0460">Magnesium</keyword>
<keyword id="KW-0479">Metal-binding</keyword>
<keyword id="KW-0540">Nuclease</keyword>
<keyword id="KW-1185">Reference proteome</keyword>
<evidence type="ECO:0000255" key="1">
    <source>
        <dbReference type="HAMAP-Rule" id="MF_00034"/>
    </source>
</evidence>